<feature type="signal peptide" evidence="2">
    <location>
        <begin position="1"/>
        <end status="unknown"/>
    </location>
</feature>
<feature type="chain" id="PRO_0000394612" description="Probable alpha-L-arabinofuranosidase C">
    <location>
        <begin status="unknown"/>
        <end position="504"/>
    </location>
</feature>
<feature type="glycosylation site" description="N-linked (GlcNAc...) asparagine" evidence="2">
    <location>
        <position position="152"/>
    </location>
</feature>
<feature type="glycosylation site" description="N-linked (GlcNAc...) asparagine" evidence="2">
    <location>
        <position position="181"/>
    </location>
</feature>
<feature type="glycosylation site" description="N-linked (GlcNAc...) asparagine" evidence="2">
    <location>
        <position position="269"/>
    </location>
</feature>
<accession>B8NIX4</accession>
<organism>
    <name type="scientific">Aspergillus flavus (strain ATCC 200026 / FGSC A1120 / IAM 13836 / NRRL 3357 / JCM 12722 / SRRC 167)</name>
    <dbReference type="NCBI Taxonomy" id="332952"/>
    <lineage>
        <taxon>Eukaryota</taxon>
        <taxon>Fungi</taxon>
        <taxon>Dikarya</taxon>
        <taxon>Ascomycota</taxon>
        <taxon>Pezizomycotina</taxon>
        <taxon>Eurotiomycetes</taxon>
        <taxon>Eurotiomycetidae</taxon>
        <taxon>Eurotiales</taxon>
        <taxon>Aspergillaceae</taxon>
        <taxon>Aspergillus</taxon>
        <taxon>Aspergillus subgen. Circumdati</taxon>
    </lineage>
</organism>
<name>ABFC_ASPFN</name>
<dbReference type="EC" id="3.2.1.55"/>
<dbReference type="EMBL" id="EQ963479">
    <property type="protein sequence ID" value="EED50180.1"/>
    <property type="molecule type" value="Genomic_DNA"/>
</dbReference>
<dbReference type="RefSeq" id="XP_002380561.1">
    <property type="nucleotide sequence ID" value="XM_002380520.1"/>
</dbReference>
<dbReference type="SMR" id="B8NIX4"/>
<dbReference type="STRING" id="332952.B8NIX4"/>
<dbReference type="GlyCosmos" id="B8NIX4">
    <property type="glycosylation" value="3 sites, No reported glycans"/>
</dbReference>
<dbReference type="EnsemblFungi" id="EED50180">
    <property type="protein sequence ID" value="EED50180"/>
    <property type="gene ID" value="AFLA_070020"/>
</dbReference>
<dbReference type="VEuPathDB" id="FungiDB:AFLA_008941"/>
<dbReference type="eggNOG" id="ENOG502QRW4">
    <property type="taxonomic scope" value="Eukaryota"/>
</dbReference>
<dbReference type="HOGENOM" id="CLU_017810_1_0_1"/>
<dbReference type="OMA" id="GETSPKW"/>
<dbReference type="UniPathway" id="UPA00667"/>
<dbReference type="GO" id="GO:0005576">
    <property type="term" value="C:extracellular region"/>
    <property type="evidence" value="ECO:0007669"/>
    <property type="project" value="UniProtKB-SubCell"/>
</dbReference>
<dbReference type="GO" id="GO:0046556">
    <property type="term" value="F:alpha-L-arabinofuranosidase activity"/>
    <property type="evidence" value="ECO:0007669"/>
    <property type="project" value="UniProtKB-EC"/>
</dbReference>
<dbReference type="GO" id="GO:0031222">
    <property type="term" value="P:arabinan catabolic process"/>
    <property type="evidence" value="ECO:0007669"/>
    <property type="project" value="UniProtKB-UniPathway"/>
</dbReference>
<dbReference type="GO" id="GO:0046373">
    <property type="term" value="P:L-arabinose metabolic process"/>
    <property type="evidence" value="ECO:0007669"/>
    <property type="project" value="InterPro"/>
</dbReference>
<dbReference type="FunFam" id="3.20.20.80:FF:000110">
    <property type="entry name" value="Alpha-L-arabinofuranosidase C"/>
    <property type="match status" value="1"/>
</dbReference>
<dbReference type="Gene3D" id="3.20.20.80">
    <property type="entry name" value="Glycosidases"/>
    <property type="match status" value="1"/>
</dbReference>
<dbReference type="Gene3D" id="2.60.40.1180">
    <property type="entry name" value="Golgi alpha-mannosidase II"/>
    <property type="match status" value="1"/>
</dbReference>
<dbReference type="InterPro" id="IPR010720">
    <property type="entry name" value="Alpha-L-AF_C"/>
</dbReference>
<dbReference type="InterPro" id="IPR013780">
    <property type="entry name" value="Glyco_hydro_b"/>
</dbReference>
<dbReference type="InterPro" id="IPR017853">
    <property type="entry name" value="Glycoside_hydrolase_SF"/>
</dbReference>
<dbReference type="PANTHER" id="PTHR43576:SF3">
    <property type="entry name" value="ALPHA-L-ARABINOFURANOSIDASE C"/>
    <property type="match status" value="1"/>
</dbReference>
<dbReference type="PANTHER" id="PTHR43576">
    <property type="entry name" value="ALPHA-L-ARABINOFURANOSIDASE C-RELATED"/>
    <property type="match status" value="1"/>
</dbReference>
<dbReference type="Pfam" id="PF06964">
    <property type="entry name" value="Alpha-L-AF_C"/>
    <property type="match status" value="1"/>
</dbReference>
<dbReference type="SMART" id="SM00813">
    <property type="entry name" value="Alpha-L-AF_C"/>
    <property type="match status" value="1"/>
</dbReference>
<dbReference type="SUPFAM" id="SSF51445">
    <property type="entry name" value="(Trans)glycosidases"/>
    <property type="match status" value="1"/>
</dbReference>
<dbReference type="SUPFAM" id="SSF51011">
    <property type="entry name" value="Glycosyl hydrolase domain"/>
    <property type="match status" value="1"/>
</dbReference>
<keyword id="KW-0119">Carbohydrate metabolism</keyword>
<keyword id="KW-0325">Glycoprotein</keyword>
<keyword id="KW-0326">Glycosidase</keyword>
<keyword id="KW-0378">Hydrolase</keyword>
<keyword id="KW-0624">Polysaccharide degradation</keyword>
<keyword id="KW-0964">Secreted</keyword>
<keyword id="KW-0732">Signal</keyword>
<gene>
    <name type="primary">abfC</name>
    <name type="ORF">AFLA_070020</name>
</gene>
<protein>
    <recommendedName>
        <fullName>Probable alpha-L-arabinofuranosidase C</fullName>
        <shortName>ABF C</shortName>
        <shortName>Arabinosidase C</shortName>
        <ecNumber>3.2.1.55</ecNumber>
    </recommendedName>
</protein>
<comment type="function">
    <text evidence="1">Alpha-L-arabinofuranosidase involved in the degradation of arabinoxylan, a major component of plant hemicellulose. Acts only on small linear 1,5-alpha-linked L-arabinofuranosyl oligosaccharides (By similarity).</text>
</comment>
<comment type="catalytic activity">
    <reaction>
        <text>Hydrolysis of terminal non-reducing alpha-L-arabinofuranoside residues in alpha-L-arabinosides.</text>
        <dbReference type="EC" id="3.2.1.55"/>
    </reaction>
</comment>
<comment type="pathway">
    <text>Glycan metabolism; L-arabinan degradation.</text>
</comment>
<comment type="subcellular location">
    <subcellularLocation>
        <location evidence="1">Secreted</location>
    </subcellularLocation>
</comment>
<comment type="similarity">
    <text evidence="3">Belongs to the glycosyl hydrolase 51 family.</text>
</comment>
<reference key="1">
    <citation type="journal article" date="2015" name="Genome Announc.">
        <title>Genome sequence of Aspergillus flavus NRRL 3357, a strain that causes aflatoxin contamination of food and feed.</title>
        <authorList>
            <person name="Nierman W.C."/>
            <person name="Yu J."/>
            <person name="Fedorova-Abrams N.D."/>
            <person name="Losada L."/>
            <person name="Cleveland T.E."/>
            <person name="Bhatnagar D."/>
            <person name="Bennett J.W."/>
            <person name="Dean R."/>
            <person name="Payne G.A."/>
        </authorList>
    </citation>
    <scope>NUCLEOTIDE SEQUENCE [LARGE SCALE GENOMIC DNA]</scope>
    <source>
        <strain>ATCC 200026 / FGSC A1120 / IAM 13836 / NRRL 3357 / JCM 12722 / SRRC 167</strain>
    </source>
</reference>
<sequence>MTTFTKLSDQDTPSIAIHPSRRISKINPNIYAGFTEHMGRCIYGGIYDPGNPLSDENGFRKDVLEALKTLDIPVVRYPGGNFMATYHWIDGVGPKDQRPARPELAWLGTETNQFGTDEFLKWCEVLGTEPYFCLNFGTGTLDEALAWVEYCNGTGNTYYANLRRKNGREEPYNVKYWALGNETWGPWQVEQMTKEAYSHKAYQWAKALKLLDPSLVLILCGQDGTASWDYYTLKHCLLPVNSPLSTSAVPLIDMHSIHLYTSSSSHLPNATAPLAAERAIEITSSLIDLARIENGVPPEQARPTICFDEWNVWDPIRAEGSKGAEECYTLSDALAVAVWLNVFVRKSKDLGMACIAQTVNVISPLMTTKEGITKQTTWWPLYLFSKYMRGWTISAHLASATYEGETSPKWIRGVKETPWLDVSAVLGEDGYVNVAVVNIHEEKAIETTIDGASGEVTVFTVTGDSVAATNMKGKEEVAVVESTWDGQGPYAFPKHSLTLLRWKA</sequence>
<evidence type="ECO:0000250" key="1"/>
<evidence type="ECO:0000255" key="2"/>
<evidence type="ECO:0000305" key="3"/>
<proteinExistence type="inferred from homology"/>